<sequence>MRIPFTKMQGAGNDFVVLDETQGRFGLSTAHYRLLADRHFGVGADQILTVRPSPAPGIDFEYLIHNADGAEVEQCGNGARCFARFVRDQGLTAKDAIRVQTRGGVIEPQLNPDGRVTVNMGAPVFELAEIPFDATGLQPQTSGLWKKWPLALVDSGHATTVYVAVVSMGNPHAVQVVDDVDTAPVRLQGPLIEHHASFPKRVNAGFMQIVDRSHIRLRVYERGTGETLACGSGACAAVVAGIRLGLLDDTVHVQTHGGTLTISWAGAAAPVLMTGPATPVFHGEINLPDNL</sequence>
<feature type="chain" id="PRO_1000011945" description="Diaminopimelate epimerase">
    <location>
        <begin position="1"/>
        <end position="291"/>
    </location>
</feature>
<feature type="active site" description="Proton donor" evidence="1">
    <location>
        <position position="75"/>
    </location>
</feature>
<feature type="active site" description="Proton acceptor" evidence="1">
    <location>
        <position position="230"/>
    </location>
</feature>
<feature type="binding site" evidence="1">
    <location>
        <position position="13"/>
    </location>
    <ligand>
        <name>substrate</name>
    </ligand>
</feature>
<feature type="binding site" evidence="1">
    <location>
        <position position="46"/>
    </location>
    <ligand>
        <name>substrate</name>
    </ligand>
</feature>
<feature type="binding site" evidence="1">
    <location>
        <position position="66"/>
    </location>
    <ligand>
        <name>substrate</name>
    </ligand>
</feature>
<feature type="binding site" evidence="1">
    <location>
        <begin position="76"/>
        <end position="77"/>
    </location>
    <ligand>
        <name>substrate</name>
    </ligand>
</feature>
<feature type="binding site" evidence="1">
    <location>
        <position position="170"/>
    </location>
    <ligand>
        <name>substrate</name>
    </ligand>
</feature>
<feature type="binding site" evidence="1">
    <location>
        <position position="203"/>
    </location>
    <ligand>
        <name>substrate</name>
    </ligand>
</feature>
<feature type="binding site" evidence="1">
    <location>
        <begin position="221"/>
        <end position="222"/>
    </location>
    <ligand>
        <name>substrate</name>
    </ligand>
</feature>
<feature type="binding site" evidence="1">
    <location>
        <begin position="231"/>
        <end position="232"/>
    </location>
    <ligand>
        <name>substrate</name>
    </ligand>
</feature>
<feature type="site" description="Could be important to modulate the pK values of the two catalytic cysteine residues" evidence="1">
    <location>
        <position position="172"/>
    </location>
</feature>
<feature type="site" description="Could be important to modulate the pK values of the two catalytic cysteine residues" evidence="1">
    <location>
        <position position="221"/>
    </location>
</feature>
<name>DAPF_ALBFT</name>
<keyword id="KW-0028">Amino-acid biosynthesis</keyword>
<keyword id="KW-0963">Cytoplasm</keyword>
<keyword id="KW-0413">Isomerase</keyword>
<keyword id="KW-0457">Lysine biosynthesis</keyword>
<keyword id="KW-1185">Reference proteome</keyword>
<evidence type="ECO:0000255" key="1">
    <source>
        <dbReference type="HAMAP-Rule" id="MF_00197"/>
    </source>
</evidence>
<organism>
    <name type="scientific">Albidiferax ferrireducens (strain ATCC BAA-621 / DSM 15236 / T118)</name>
    <name type="common">Rhodoferax ferrireducens</name>
    <dbReference type="NCBI Taxonomy" id="338969"/>
    <lineage>
        <taxon>Bacteria</taxon>
        <taxon>Pseudomonadati</taxon>
        <taxon>Pseudomonadota</taxon>
        <taxon>Betaproteobacteria</taxon>
        <taxon>Burkholderiales</taxon>
        <taxon>Comamonadaceae</taxon>
        <taxon>Rhodoferax</taxon>
    </lineage>
</organism>
<reference key="1">
    <citation type="submission" date="2006-02" db="EMBL/GenBank/DDBJ databases">
        <title>Complete sequence of chromosome of Rhodoferax ferrireducens DSM 15236.</title>
        <authorList>
            <person name="Copeland A."/>
            <person name="Lucas S."/>
            <person name="Lapidus A."/>
            <person name="Barry K."/>
            <person name="Detter J.C."/>
            <person name="Glavina del Rio T."/>
            <person name="Hammon N."/>
            <person name="Israni S."/>
            <person name="Pitluck S."/>
            <person name="Brettin T."/>
            <person name="Bruce D."/>
            <person name="Han C."/>
            <person name="Tapia R."/>
            <person name="Gilna P."/>
            <person name="Kiss H."/>
            <person name="Schmutz J."/>
            <person name="Larimer F."/>
            <person name="Land M."/>
            <person name="Kyrpides N."/>
            <person name="Ivanova N."/>
            <person name="Richardson P."/>
        </authorList>
    </citation>
    <scope>NUCLEOTIDE SEQUENCE [LARGE SCALE GENOMIC DNA]</scope>
    <source>
        <strain>ATCC BAA-621 / DSM 15236 / T118</strain>
    </source>
</reference>
<protein>
    <recommendedName>
        <fullName evidence="1">Diaminopimelate epimerase</fullName>
        <shortName evidence="1">DAP epimerase</shortName>
        <ecNumber evidence="1">5.1.1.7</ecNumber>
    </recommendedName>
    <alternativeName>
        <fullName evidence="1">PLP-independent amino acid racemase</fullName>
    </alternativeName>
</protein>
<dbReference type="EC" id="5.1.1.7" evidence="1"/>
<dbReference type="EMBL" id="CP000267">
    <property type="protein sequence ID" value="ABD71153.1"/>
    <property type="molecule type" value="Genomic_DNA"/>
</dbReference>
<dbReference type="RefSeq" id="WP_011465716.1">
    <property type="nucleotide sequence ID" value="NC_007908.1"/>
</dbReference>
<dbReference type="SMR" id="Q21SV0"/>
<dbReference type="STRING" id="338969.Rfer_3444"/>
<dbReference type="KEGG" id="rfr:Rfer_3444"/>
<dbReference type="eggNOG" id="COG0253">
    <property type="taxonomic scope" value="Bacteria"/>
</dbReference>
<dbReference type="HOGENOM" id="CLU_053306_1_1_4"/>
<dbReference type="OrthoDB" id="9805408at2"/>
<dbReference type="UniPathway" id="UPA00034">
    <property type="reaction ID" value="UER00025"/>
</dbReference>
<dbReference type="Proteomes" id="UP000008332">
    <property type="component" value="Chromosome"/>
</dbReference>
<dbReference type="GO" id="GO:0005829">
    <property type="term" value="C:cytosol"/>
    <property type="evidence" value="ECO:0007669"/>
    <property type="project" value="TreeGrafter"/>
</dbReference>
<dbReference type="GO" id="GO:0008837">
    <property type="term" value="F:diaminopimelate epimerase activity"/>
    <property type="evidence" value="ECO:0007669"/>
    <property type="project" value="UniProtKB-UniRule"/>
</dbReference>
<dbReference type="GO" id="GO:0009089">
    <property type="term" value="P:lysine biosynthetic process via diaminopimelate"/>
    <property type="evidence" value="ECO:0007669"/>
    <property type="project" value="UniProtKB-UniRule"/>
</dbReference>
<dbReference type="FunFam" id="3.10.310.10:FF:000001">
    <property type="entry name" value="Diaminopimelate epimerase"/>
    <property type="match status" value="1"/>
</dbReference>
<dbReference type="Gene3D" id="3.10.310.10">
    <property type="entry name" value="Diaminopimelate Epimerase, Chain A, domain 1"/>
    <property type="match status" value="2"/>
</dbReference>
<dbReference type="HAMAP" id="MF_00197">
    <property type="entry name" value="DAP_epimerase"/>
    <property type="match status" value="1"/>
</dbReference>
<dbReference type="InterPro" id="IPR001653">
    <property type="entry name" value="DAP_epimerase_DapF"/>
</dbReference>
<dbReference type="NCBIfam" id="TIGR00652">
    <property type="entry name" value="DapF"/>
    <property type="match status" value="1"/>
</dbReference>
<dbReference type="PANTHER" id="PTHR31689:SF0">
    <property type="entry name" value="DIAMINOPIMELATE EPIMERASE"/>
    <property type="match status" value="1"/>
</dbReference>
<dbReference type="PANTHER" id="PTHR31689">
    <property type="entry name" value="DIAMINOPIMELATE EPIMERASE, CHLOROPLASTIC"/>
    <property type="match status" value="1"/>
</dbReference>
<dbReference type="Pfam" id="PF01678">
    <property type="entry name" value="DAP_epimerase"/>
    <property type="match status" value="2"/>
</dbReference>
<dbReference type="SUPFAM" id="SSF54506">
    <property type="entry name" value="Diaminopimelate epimerase-like"/>
    <property type="match status" value="2"/>
</dbReference>
<gene>
    <name evidence="1" type="primary">dapF</name>
    <name type="ordered locus">Rfer_3444</name>
</gene>
<accession>Q21SV0</accession>
<comment type="function">
    <text evidence="1">Catalyzes the stereoinversion of LL-2,6-diaminopimelate (L,L-DAP) to meso-diaminopimelate (meso-DAP), a precursor of L-lysine and an essential component of the bacterial peptidoglycan.</text>
</comment>
<comment type="catalytic activity">
    <reaction evidence="1">
        <text>(2S,6S)-2,6-diaminopimelate = meso-2,6-diaminopimelate</text>
        <dbReference type="Rhea" id="RHEA:15393"/>
        <dbReference type="ChEBI" id="CHEBI:57609"/>
        <dbReference type="ChEBI" id="CHEBI:57791"/>
        <dbReference type="EC" id="5.1.1.7"/>
    </reaction>
</comment>
<comment type="pathway">
    <text evidence="1">Amino-acid biosynthesis; L-lysine biosynthesis via DAP pathway; DL-2,6-diaminopimelate from LL-2,6-diaminopimelate: step 1/1.</text>
</comment>
<comment type="subunit">
    <text evidence="1">Homodimer.</text>
</comment>
<comment type="subcellular location">
    <subcellularLocation>
        <location evidence="1">Cytoplasm</location>
    </subcellularLocation>
</comment>
<comment type="similarity">
    <text evidence="1">Belongs to the diaminopimelate epimerase family.</text>
</comment>
<proteinExistence type="inferred from homology"/>